<reference key="1">
    <citation type="journal article" date="2005" name="Nucleic Acids Res.">
        <title>The genome sequence of Xanthomonas oryzae pathovar oryzae KACC10331, the bacterial blight pathogen of rice.</title>
        <authorList>
            <person name="Lee B.-M."/>
            <person name="Park Y.-J."/>
            <person name="Park D.-S."/>
            <person name="Kang H.-W."/>
            <person name="Kim J.-G."/>
            <person name="Song E.-S."/>
            <person name="Park I.-C."/>
            <person name="Yoon U.-H."/>
            <person name="Hahn J.-H."/>
            <person name="Koo B.-S."/>
            <person name="Lee G.-B."/>
            <person name="Kim H."/>
            <person name="Park H.-S."/>
            <person name="Yoon K.-O."/>
            <person name="Kim J.-H."/>
            <person name="Jung C.-H."/>
            <person name="Koh N.-H."/>
            <person name="Seo J.-S."/>
            <person name="Go S.-J."/>
        </authorList>
    </citation>
    <scope>NUCLEOTIDE SEQUENCE [LARGE SCALE GENOMIC DNA]</scope>
    <source>
        <strain>KACC10331 / KXO85</strain>
    </source>
</reference>
<comment type="cofactor">
    <cofactor evidence="1">
        <name>Mg(2+)</name>
        <dbReference type="ChEBI" id="CHEBI:18420"/>
    </cofactor>
    <cofactor evidence="1">
        <name>Mn(2+)</name>
        <dbReference type="ChEBI" id="CHEBI:29035"/>
    </cofactor>
    <text evidence="1">Binds 2 magnesium or manganese ions per subunit.</text>
</comment>
<comment type="similarity">
    <text evidence="1">Belongs to the RimK family.</text>
</comment>
<comment type="sequence caution" evidence="2">
    <conflict type="erroneous initiation">
        <sequence resource="EMBL-CDS" id="AAW74464"/>
    </conflict>
</comment>
<proteinExistence type="inferred from homology"/>
<keyword id="KW-0067">ATP-binding</keyword>
<keyword id="KW-0436">Ligase</keyword>
<keyword id="KW-0460">Magnesium</keyword>
<keyword id="KW-0464">Manganese</keyword>
<keyword id="KW-0479">Metal-binding</keyword>
<keyword id="KW-0547">Nucleotide-binding</keyword>
<keyword id="KW-0648">Protein biosynthesis</keyword>
<keyword id="KW-1185">Reference proteome</keyword>
<dbReference type="EC" id="6.3.2.-" evidence="1"/>
<dbReference type="EMBL" id="AE013598">
    <property type="protein sequence ID" value="AAW74464.1"/>
    <property type="status" value="ALT_INIT"/>
    <property type="molecule type" value="Genomic_DNA"/>
</dbReference>
<dbReference type="SMR" id="Q5H3K7"/>
<dbReference type="STRING" id="291331.XOO1210"/>
<dbReference type="KEGG" id="xoo:XOO1210"/>
<dbReference type="HOGENOM" id="CLU_054353_0_1_6"/>
<dbReference type="Proteomes" id="UP000006735">
    <property type="component" value="Chromosome"/>
</dbReference>
<dbReference type="GO" id="GO:0005737">
    <property type="term" value="C:cytoplasm"/>
    <property type="evidence" value="ECO:0007669"/>
    <property type="project" value="TreeGrafter"/>
</dbReference>
<dbReference type="GO" id="GO:0005524">
    <property type="term" value="F:ATP binding"/>
    <property type="evidence" value="ECO:0007669"/>
    <property type="project" value="UniProtKB-UniRule"/>
</dbReference>
<dbReference type="GO" id="GO:0046872">
    <property type="term" value="F:metal ion binding"/>
    <property type="evidence" value="ECO:0007669"/>
    <property type="project" value="UniProtKB-KW"/>
</dbReference>
<dbReference type="GO" id="GO:0018169">
    <property type="term" value="F:ribosomal S6-glutamic acid ligase activity"/>
    <property type="evidence" value="ECO:0007669"/>
    <property type="project" value="TreeGrafter"/>
</dbReference>
<dbReference type="GO" id="GO:0036211">
    <property type="term" value="P:protein modification process"/>
    <property type="evidence" value="ECO:0007669"/>
    <property type="project" value="InterPro"/>
</dbReference>
<dbReference type="GO" id="GO:0009432">
    <property type="term" value="P:SOS response"/>
    <property type="evidence" value="ECO:0007669"/>
    <property type="project" value="TreeGrafter"/>
</dbReference>
<dbReference type="GO" id="GO:0006412">
    <property type="term" value="P:translation"/>
    <property type="evidence" value="ECO:0007669"/>
    <property type="project" value="UniProtKB-KW"/>
</dbReference>
<dbReference type="FunFam" id="3.40.50.20:FF:000004">
    <property type="entry name" value="Probable alpha-L-glutamate ligase"/>
    <property type="match status" value="1"/>
</dbReference>
<dbReference type="FunFam" id="3.30.1490.20:FF:000005">
    <property type="entry name" value="Probable alpha-L-glutamate ligase 1"/>
    <property type="match status" value="1"/>
</dbReference>
<dbReference type="Gene3D" id="3.40.50.20">
    <property type="match status" value="1"/>
</dbReference>
<dbReference type="Gene3D" id="3.30.1490.20">
    <property type="entry name" value="ATP-grasp fold, A domain"/>
    <property type="match status" value="1"/>
</dbReference>
<dbReference type="Gene3D" id="3.30.470.20">
    <property type="entry name" value="ATP-grasp fold, B domain"/>
    <property type="match status" value="1"/>
</dbReference>
<dbReference type="HAMAP" id="MF_01552">
    <property type="entry name" value="RimK"/>
    <property type="match status" value="1"/>
</dbReference>
<dbReference type="InterPro" id="IPR011761">
    <property type="entry name" value="ATP-grasp"/>
</dbReference>
<dbReference type="InterPro" id="IPR013651">
    <property type="entry name" value="ATP-grasp_RimK-type"/>
</dbReference>
<dbReference type="InterPro" id="IPR013815">
    <property type="entry name" value="ATP_grasp_subdomain_1"/>
</dbReference>
<dbReference type="InterPro" id="IPR023533">
    <property type="entry name" value="RimK"/>
</dbReference>
<dbReference type="InterPro" id="IPR041107">
    <property type="entry name" value="Rimk_N"/>
</dbReference>
<dbReference type="InterPro" id="IPR004666">
    <property type="entry name" value="Rp_bS6_RimK/Lys_biosynth_LsyX"/>
</dbReference>
<dbReference type="NCBIfam" id="NF007764">
    <property type="entry name" value="PRK10446.1"/>
    <property type="match status" value="1"/>
</dbReference>
<dbReference type="NCBIfam" id="TIGR00768">
    <property type="entry name" value="rimK_fam"/>
    <property type="match status" value="1"/>
</dbReference>
<dbReference type="PANTHER" id="PTHR21621:SF7">
    <property type="entry name" value="RIBOSOMAL PROTEIN BS6--L-GLUTAMATE LIGASE"/>
    <property type="match status" value="1"/>
</dbReference>
<dbReference type="PANTHER" id="PTHR21621">
    <property type="entry name" value="RIBOSOMAL PROTEIN S6 MODIFICATION PROTEIN"/>
    <property type="match status" value="1"/>
</dbReference>
<dbReference type="Pfam" id="PF08443">
    <property type="entry name" value="RimK"/>
    <property type="match status" value="1"/>
</dbReference>
<dbReference type="Pfam" id="PF18030">
    <property type="entry name" value="Rimk_N"/>
    <property type="match status" value="1"/>
</dbReference>
<dbReference type="SUPFAM" id="SSF56059">
    <property type="entry name" value="Glutathione synthetase ATP-binding domain-like"/>
    <property type="match status" value="1"/>
</dbReference>
<dbReference type="PROSITE" id="PS50975">
    <property type="entry name" value="ATP_GRASP"/>
    <property type="match status" value="1"/>
</dbReference>
<evidence type="ECO:0000255" key="1">
    <source>
        <dbReference type="HAMAP-Rule" id="MF_01552"/>
    </source>
</evidence>
<evidence type="ECO:0000305" key="2"/>
<name>RIMK_XANOR</name>
<protein>
    <recommendedName>
        <fullName evidence="1">Probable alpha-L-glutamate ligase</fullName>
        <ecNumber evidence="1">6.3.2.-</ecNumber>
    </recommendedName>
</protein>
<accession>Q5H3K7</accession>
<feature type="chain" id="PRO_0000205496" description="Probable alpha-L-glutamate ligase">
    <location>
        <begin position="1"/>
        <end position="295"/>
    </location>
</feature>
<feature type="domain" description="ATP-grasp" evidence="1">
    <location>
        <begin position="104"/>
        <end position="287"/>
    </location>
</feature>
<feature type="binding site" evidence="1">
    <location>
        <position position="141"/>
    </location>
    <ligand>
        <name>ATP</name>
        <dbReference type="ChEBI" id="CHEBI:30616"/>
    </ligand>
</feature>
<feature type="binding site" evidence="1">
    <location>
        <begin position="178"/>
        <end position="179"/>
    </location>
    <ligand>
        <name>ATP</name>
        <dbReference type="ChEBI" id="CHEBI:30616"/>
    </ligand>
</feature>
<feature type="binding site" evidence="1">
    <location>
        <position position="187"/>
    </location>
    <ligand>
        <name>ATP</name>
        <dbReference type="ChEBI" id="CHEBI:30616"/>
    </ligand>
</feature>
<feature type="binding site" evidence="1">
    <location>
        <begin position="211"/>
        <end position="213"/>
    </location>
    <ligand>
        <name>ATP</name>
        <dbReference type="ChEBI" id="CHEBI:30616"/>
    </ligand>
</feature>
<feature type="binding site" evidence="1">
    <location>
        <position position="248"/>
    </location>
    <ligand>
        <name>Mg(2+)</name>
        <dbReference type="ChEBI" id="CHEBI:18420"/>
        <label>1</label>
    </ligand>
</feature>
<feature type="binding site" evidence="1">
    <location>
        <position position="248"/>
    </location>
    <ligand>
        <name>Mn(2+)</name>
        <dbReference type="ChEBI" id="CHEBI:29035"/>
        <label>1</label>
    </ligand>
</feature>
<feature type="binding site" evidence="1">
    <location>
        <position position="260"/>
    </location>
    <ligand>
        <name>Mg(2+)</name>
        <dbReference type="ChEBI" id="CHEBI:18420"/>
        <label>1</label>
    </ligand>
</feature>
<feature type="binding site" evidence="1">
    <location>
        <position position="260"/>
    </location>
    <ligand>
        <name>Mg(2+)</name>
        <dbReference type="ChEBI" id="CHEBI:18420"/>
        <label>2</label>
    </ligand>
</feature>
<feature type="binding site" evidence="1">
    <location>
        <position position="260"/>
    </location>
    <ligand>
        <name>Mn(2+)</name>
        <dbReference type="ChEBI" id="CHEBI:29035"/>
        <label>1</label>
    </ligand>
</feature>
<feature type="binding site" evidence="1">
    <location>
        <position position="260"/>
    </location>
    <ligand>
        <name>Mn(2+)</name>
        <dbReference type="ChEBI" id="CHEBI:29035"/>
        <label>2</label>
    </ligand>
</feature>
<feature type="binding site" evidence="1">
    <location>
        <position position="262"/>
    </location>
    <ligand>
        <name>Mg(2+)</name>
        <dbReference type="ChEBI" id="CHEBI:18420"/>
        <label>2</label>
    </ligand>
</feature>
<feature type="binding site" evidence="1">
    <location>
        <position position="262"/>
    </location>
    <ligand>
        <name>Mn(2+)</name>
        <dbReference type="ChEBI" id="CHEBI:29035"/>
        <label>2</label>
    </ligand>
</feature>
<gene>
    <name evidence="1" type="primary">rimK</name>
    <name type="ordered locus">XOO1210</name>
</gene>
<organism>
    <name type="scientific">Xanthomonas oryzae pv. oryzae (strain KACC10331 / KXO85)</name>
    <dbReference type="NCBI Taxonomy" id="291331"/>
    <lineage>
        <taxon>Bacteria</taxon>
        <taxon>Pseudomonadati</taxon>
        <taxon>Pseudomonadota</taxon>
        <taxon>Gammaproteobacteria</taxon>
        <taxon>Lysobacterales</taxon>
        <taxon>Lysobacteraceae</taxon>
        <taxon>Xanthomonas</taxon>
    </lineage>
</organism>
<sequence length="295" mass="31676">MKIAILSRNSKLYSTRRLIEAGRKRGHTVRILDPLRCYMRIAADGFSLHYKGKPITGFDAVIPRIGASVTRYGTAVLRQLEFMGTYTPNPSDAILRARDKLRAHQLLAAQGIDMPVTVFGDNPDDTQDLLSMLGPPPHVVKLNEGAQGAGVILTEKASASRSVVEALRGLYANFIVQEFIGEAEGADLRCFVVGDRVVAAMRRQAAEGDFRSNLHLGGTAVVADATELEREVAVRSARALGLAVAGVDLIRSKRGPLVLEVNSTPGLEGVEGVCGVDVAGAIVQHLEQSVRRSAD</sequence>